<sequence length="239" mass="25580">MNKNIIIKSIAALTILTSITGVGTTVVDGIQQTAKAENSVKLITNTNVAPYSGVTWMGAGTGFVVGNHTIITNKHVTYHMKVGDEIKAHPNGFYNNGGGLYKVTKIVDYPGKEDIAVVQVEEKSTQPKGRKFKDFTSKFNIASEAKENEPISVIGYPNPNGNKLQMYESTGKVLSVNGNIVSSDAIIQPGSSGSPILNSKHEAIGVIYAGNKPSGESTRGFAVYFSPEIKKFIADNLDK</sequence>
<feature type="signal peptide" evidence="1">
    <location>
        <begin position="1"/>
        <end position="36"/>
    </location>
</feature>
<feature type="chain" id="PRO_5000257049" description="Serine protease SplF">
    <location>
        <begin position="37"/>
        <end position="239"/>
    </location>
</feature>
<feature type="active site" description="Charge relay system" evidence="1">
    <location>
        <position position="75"/>
    </location>
</feature>
<feature type="active site" description="Charge relay system" evidence="1">
    <location>
        <position position="114"/>
    </location>
</feature>
<feature type="active site" description="Charge relay system" evidence="1">
    <location>
        <position position="192"/>
    </location>
</feature>
<proteinExistence type="inferred from homology"/>
<comment type="subcellular location">
    <subcellularLocation>
        <location evidence="1">Secreted</location>
    </subcellularLocation>
</comment>
<comment type="similarity">
    <text evidence="2">Belongs to the peptidase S1B family.</text>
</comment>
<protein>
    <recommendedName>
        <fullName>Serine protease SplF</fullName>
        <ecNumber>3.4.21.-</ecNumber>
    </recommendedName>
</protein>
<gene>
    <name type="primary">splF</name>
    <name type="ordered locus">SaurJH1_1896</name>
</gene>
<dbReference type="EC" id="3.4.21.-"/>
<dbReference type="EMBL" id="CP000736">
    <property type="protein sequence ID" value="ABR52734.1"/>
    <property type="molecule type" value="Genomic_DNA"/>
</dbReference>
<dbReference type="SMR" id="A6U2R6"/>
<dbReference type="MEROPS" id="S01.526"/>
<dbReference type="KEGG" id="sah:SaurJH1_1896"/>
<dbReference type="HOGENOM" id="CLU_073589_2_0_9"/>
<dbReference type="GO" id="GO:0005576">
    <property type="term" value="C:extracellular region"/>
    <property type="evidence" value="ECO:0007669"/>
    <property type="project" value="UniProtKB-SubCell"/>
</dbReference>
<dbReference type="GO" id="GO:0008236">
    <property type="term" value="F:serine-type peptidase activity"/>
    <property type="evidence" value="ECO:0007669"/>
    <property type="project" value="UniProtKB-KW"/>
</dbReference>
<dbReference type="GO" id="GO:0006508">
    <property type="term" value="P:proteolysis"/>
    <property type="evidence" value="ECO:0007669"/>
    <property type="project" value="UniProtKB-KW"/>
</dbReference>
<dbReference type="Gene3D" id="2.40.10.10">
    <property type="entry name" value="Trypsin-like serine proteases"/>
    <property type="match status" value="2"/>
</dbReference>
<dbReference type="InterPro" id="IPR009003">
    <property type="entry name" value="Peptidase_S1_PA"/>
</dbReference>
<dbReference type="InterPro" id="IPR043504">
    <property type="entry name" value="Peptidase_S1_PA_chymotrypsin"/>
</dbReference>
<dbReference type="InterPro" id="IPR008256">
    <property type="entry name" value="Peptidase_S1B"/>
</dbReference>
<dbReference type="InterPro" id="IPR028301">
    <property type="entry name" value="V8_his_AS"/>
</dbReference>
<dbReference type="PANTHER" id="PTHR43019:SF23">
    <property type="entry name" value="PROTEASE DO-LIKE 5, CHLOROPLASTIC"/>
    <property type="match status" value="1"/>
</dbReference>
<dbReference type="PANTHER" id="PTHR43019">
    <property type="entry name" value="SERINE ENDOPROTEASE DEGS"/>
    <property type="match status" value="1"/>
</dbReference>
<dbReference type="Pfam" id="PF13365">
    <property type="entry name" value="Trypsin_2"/>
    <property type="match status" value="1"/>
</dbReference>
<dbReference type="PRINTS" id="PR00839">
    <property type="entry name" value="V8PROTEASE"/>
</dbReference>
<dbReference type="SUPFAM" id="SSF50494">
    <property type="entry name" value="Trypsin-like serine proteases"/>
    <property type="match status" value="1"/>
</dbReference>
<dbReference type="PROSITE" id="PS00672">
    <property type="entry name" value="V8_HIS"/>
    <property type="match status" value="1"/>
</dbReference>
<keyword id="KW-0378">Hydrolase</keyword>
<keyword id="KW-0645">Protease</keyword>
<keyword id="KW-0964">Secreted</keyword>
<keyword id="KW-0720">Serine protease</keyword>
<keyword id="KW-0732">Signal</keyword>
<evidence type="ECO:0000250" key="1"/>
<evidence type="ECO:0000305" key="2"/>
<name>SPLF_STAA2</name>
<accession>A6U2R6</accession>
<organism>
    <name type="scientific">Staphylococcus aureus (strain JH1)</name>
    <dbReference type="NCBI Taxonomy" id="359787"/>
    <lineage>
        <taxon>Bacteria</taxon>
        <taxon>Bacillati</taxon>
        <taxon>Bacillota</taxon>
        <taxon>Bacilli</taxon>
        <taxon>Bacillales</taxon>
        <taxon>Staphylococcaceae</taxon>
        <taxon>Staphylococcus</taxon>
    </lineage>
</organism>
<reference key="1">
    <citation type="submission" date="2007-06" db="EMBL/GenBank/DDBJ databases">
        <title>Complete sequence of chromosome of Staphylococcus aureus subsp. aureus JH1.</title>
        <authorList>
            <consortium name="US DOE Joint Genome Institute"/>
            <person name="Copeland A."/>
            <person name="Lucas S."/>
            <person name="Lapidus A."/>
            <person name="Barry K."/>
            <person name="Detter J.C."/>
            <person name="Glavina del Rio T."/>
            <person name="Hammon N."/>
            <person name="Israni S."/>
            <person name="Dalin E."/>
            <person name="Tice H."/>
            <person name="Pitluck S."/>
            <person name="Chain P."/>
            <person name="Malfatti S."/>
            <person name="Shin M."/>
            <person name="Vergez L."/>
            <person name="Schmutz J."/>
            <person name="Larimer F."/>
            <person name="Land M."/>
            <person name="Hauser L."/>
            <person name="Kyrpides N."/>
            <person name="Ivanova N."/>
            <person name="Tomasz A."/>
            <person name="Richardson P."/>
        </authorList>
    </citation>
    <scope>NUCLEOTIDE SEQUENCE [LARGE SCALE GENOMIC DNA]</scope>
    <source>
        <strain>JH1</strain>
    </source>
</reference>